<name>LSPA_MYCS2</name>
<reference key="1">
    <citation type="submission" date="2006-10" db="EMBL/GenBank/DDBJ databases">
        <authorList>
            <person name="Fleischmann R.D."/>
            <person name="Dodson R.J."/>
            <person name="Haft D.H."/>
            <person name="Merkel J.S."/>
            <person name="Nelson W.C."/>
            <person name="Fraser C.M."/>
        </authorList>
    </citation>
    <scope>NUCLEOTIDE SEQUENCE [LARGE SCALE GENOMIC DNA]</scope>
    <source>
        <strain>ATCC 700084 / mc(2)155</strain>
    </source>
</reference>
<reference key="2">
    <citation type="journal article" date="2007" name="Genome Biol.">
        <title>Interrupted coding sequences in Mycobacterium smegmatis: authentic mutations or sequencing errors?</title>
        <authorList>
            <person name="Deshayes C."/>
            <person name="Perrodou E."/>
            <person name="Gallien S."/>
            <person name="Euphrasie D."/>
            <person name="Schaeffer C."/>
            <person name="Van-Dorsselaer A."/>
            <person name="Poch O."/>
            <person name="Lecompte O."/>
            <person name="Reyrat J.-M."/>
        </authorList>
    </citation>
    <scope>NUCLEOTIDE SEQUENCE [LARGE SCALE GENOMIC DNA]</scope>
    <source>
        <strain>ATCC 700084 / mc(2)155</strain>
    </source>
</reference>
<reference key="3">
    <citation type="journal article" date="2009" name="Genome Res.">
        <title>Ortho-proteogenomics: multiple proteomes investigation through orthology and a new MS-based protocol.</title>
        <authorList>
            <person name="Gallien S."/>
            <person name="Perrodou E."/>
            <person name="Carapito C."/>
            <person name="Deshayes C."/>
            <person name="Reyrat J.-M."/>
            <person name="Van Dorsselaer A."/>
            <person name="Poch O."/>
            <person name="Schaeffer C."/>
            <person name="Lecompte O."/>
        </authorList>
    </citation>
    <scope>NUCLEOTIDE SEQUENCE [LARGE SCALE GENOMIC DNA]</scope>
    <source>
        <strain>ATCC 700084 / mc(2)155</strain>
    </source>
</reference>
<reference key="4">
    <citation type="journal article" date="2009" name="J. Biol. Chem.">
        <title>Identification of apolipoprotein N-acyltransferase (Lnt) in mycobacteria.</title>
        <authorList>
            <person name="Tschumi A."/>
            <person name="Nai C."/>
            <person name="Auchli Y."/>
            <person name="Hunziker P."/>
            <person name="Gehrig P."/>
            <person name="Keller P."/>
            <person name="Grau T."/>
            <person name="Sander P."/>
        </authorList>
    </citation>
    <scope>FUNCTION</scope>
    <scope>DISRUPTION PHENOTYPE</scope>
</reference>
<evidence type="ECO:0000255" key="1">
    <source>
        <dbReference type="HAMAP-Rule" id="MF_00161"/>
    </source>
</evidence>
<evidence type="ECO:0000256" key="2">
    <source>
        <dbReference type="SAM" id="MobiDB-lite"/>
    </source>
</evidence>
<evidence type="ECO:0000269" key="3">
    <source>
    </source>
</evidence>
<evidence type="ECO:0000305" key="4">
    <source>
    </source>
</evidence>
<protein>
    <recommendedName>
        <fullName evidence="1">Lipoprotein signal peptidase</fullName>
        <ecNumber evidence="1">3.4.23.36</ecNumber>
    </recommendedName>
    <alternativeName>
        <fullName evidence="1">Prolipoprotein signal peptidase</fullName>
    </alternativeName>
    <alternativeName>
        <fullName evidence="1">Signal peptidase II</fullName>
        <shortName evidence="1">SPase II</shortName>
    </alternativeName>
</protein>
<keyword id="KW-0064">Aspartyl protease</keyword>
<keyword id="KW-1003">Cell membrane</keyword>
<keyword id="KW-0378">Hydrolase</keyword>
<keyword id="KW-0472">Membrane</keyword>
<keyword id="KW-0645">Protease</keyword>
<keyword id="KW-1185">Reference proteome</keyword>
<keyword id="KW-0812">Transmembrane</keyword>
<keyword id="KW-1133">Transmembrane helix</keyword>
<comment type="function">
    <text evidence="1 4">This protein specifically catalyzes the removal of signal peptides from prolipoproteins.</text>
</comment>
<comment type="catalytic activity">
    <reaction evidence="1">
        <text>Release of signal peptides from bacterial membrane prolipoproteins. Hydrolyzes -Xaa-Yaa-Zaa-|-(S,diacylglyceryl)Cys-, in which Xaa is hydrophobic (preferably Leu), and Yaa (Ala or Ser) and Zaa (Gly or Ala) have small, neutral side chains.</text>
        <dbReference type="EC" id="3.4.23.36"/>
    </reaction>
</comment>
<comment type="pathway">
    <text evidence="1">Protein modification; lipoprotein biosynthesis (signal peptide cleavage).</text>
</comment>
<comment type="subcellular location">
    <subcellularLocation>
        <location evidence="1">Cell membrane</location>
        <topology evidence="1">Multi-pass membrane protein</topology>
    </subcellularLocation>
</comment>
<comment type="disruption phenotype">
    <text evidence="3">No processing of prolipoprotein LppX and synthetic prolipoprotein constructs.</text>
</comment>
<comment type="similarity">
    <text evidence="1">Belongs to the peptidase A8 family.</text>
</comment>
<organism>
    <name type="scientific">Mycolicibacterium smegmatis (strain ATCC 700084 / mc(2)155)</name>
    <name type="common">Mycobacterium smegmatis</name>
    <dbReference type="NCBI Taxonomy" id="246196"/>
    <lineage>
        <taxon>Bacteria</taxon>
        <taxon>Bacillati</taxon>
        <taxon>Actinomycetota</taxon>
        <taxon>Actinomycetes</taxon>
        <taxon>Mycobacteriales</taxon>
        <taxon>Mycobacteriaceae</taxon>
        <taxon>Mycolicibacterium</taxon>
    </lineage>
</organism>
<gene>
    <name evidence="1" type="primary">lspA</name>
    <name type="ordered locus">MSMEG_3174</name>
    <name type="ordered locus">MSMEI_3092</name>
</gene>
<feature type="chain" id="PRO_0000434893" description="Lipoprotein signal peptidase">
    <location>
        <begin position="1"/>
        <end position="235"/>
    </location>
</feature>
<feature type="transmembrane region" description="Helical" evidence="1">
    <location>
        <begin position="31"/>
        <end position="51"/>
    </location>
</feature>
<feature type="transmembrane region" description="Helical" evidence="1">
    <location>
        <begin position="84"/>
        <end position="104"/>
    </location>
</feature>
<feature type="transmembrane region" description="Helical" evidence="1">
    <location>
        <begin position="108"/>
        <end position="128"/>
    </location>
</feature>
<feature type="transmembrane region" description="Helical" evidence="1">
    <location>
        <begin position="156"/>
        <end position="176"/>
    </location>
</feature>
<feature type="region of interest" description="Disordered" evidence="2">
    <location>
        <begin position="1"/>
        <end position="23"/>
    </location>
</feature>
<feature type="region of interest" description="Disordered" evidence="2">
    <location>
        <begin position="185"/>
        <end position="235"/>
    </location>
</feature>
<feature type="compositionally biased region" description="Low complexity" evidence="2">
    <location>
        <begin position="201"/>
        <end position="218"/>
    </location>
</feature>
<feature type="active site" evidence="1">
    <location>
        <position position="144"/>
    </location>
</feature>
<feature type="active site" evidence="1">
    <location>
        <position position="158"/>
    </location>
</feature>
<proteinExistence type="inferred from homology"/>
<accession>A0QX51</accession>
<sequence length="235" mass="24535">MTDETSGPAEPVTDAPGDAESPAQPKRRLRLLLTVAAVVLFLDVVTKVLAVRLLTPGQPVSIIGDTVTWTLVRNSGAAFSMATGYTWVLTLVATGVVIGIIWMGRRLVSPWWALGLGLILGGATGNLVDRFFRSPGPLRGHVVDFFSVGWWPVFNVADPSVVGGAILLVALSLFGFDFDTVGRRRPGEDAEPSAGASDSTPEAPAADGPDKPAGPVGPEDAAEESKTVGHQAEPS</sequence>
<dbReference type="EC" id="3.4.23.36" evidence="1"/>
<dbReference type="EMBL" id="CP000480">
    <property type="protein sequence ID" value="ABK75519.1"/>
    <property type="molecule type" value="Genomic_DNA"/>
</dbReference>
<dbReference type="EMBL" id="CP001663">
    <property type="protein sequence ID" value="AFP39556.1"/>
    <property type="molecule type" value="Genomic_DNA"/>
</dbReference>
<dbReference type="RefSeq" id="YP_887489.1">
    <property type="nucleotide sequence ID" value="NC_008596.1"/>
</dbReference>
<dbReference type="SMR" id="A0QX51"/>
<dbReference type="STRING" id="246196.MSMEG_3174"/>
<dbReference type="PaxDb" id="246196-MSMEI_3092"/>
<dbReference type="KEGG" id="msb:LJ00_15780"/>
<dbReference type="KEGG" id="msg:MSMEI_3092"/>
<dbReference type="KEGG" id="msm:MSMEG_3174"/>
<dbReference type="PATRIC" id="fig|246196.19.peg.3135"/>
<dbReference type="eggNOG" id="COG0597">
    <property type="taxonomic scope" value="Bacteria"/>
</dbReference>
<dbReference type="OrthoDB" id="4308908at2"/>
<dbReference type="UniPathway" id="UPA00665"/>
<dbReference type="Proteomes" id="UP000000757">
    <property type="component" value="Chromosome"/>
</dbReference>
<dbReference type="Proteomes" id="UP000006158">
    <property type="component" value="Chromosome"/>
</dbReference>
<dbReference type="GO" id="GO:0005886">
    <property type="term" value="C:plasma membrane"/>
    <property type="evidence" value="ECO:0007669"/>
    <property type="project" value="UniProtKB-SubCell"/>
</dbReference>
<dbReference type="GO" id="GO:0004190">
    <property type="term" value="F:aspartic-type endopeptidase activity"/>
    <property type="evidence" value="ECO:0007669"/>
    <property type="project" value="UniProtKB-UniRule"/>
</dbReference>
<dbReference type="GO" id="GO:0006508">
    <property type="term" value="P:proteolysis"/>
    <property type="evidence" value="ECO:0007669"/>
    <property type="project" value="UniProtKB-KW"/>
</dbReference>
<dbReference type="HAMAP" id="MF_00161">
    <property type="entry name" value="LspA"/>
    <property type="match status" value="1"/>
</dbReference>
<dbReference type="InterPro" id="IPR001872">
    <property type="entry name" value="Peptidase_A8"/>
</dbReference>
<dbReference type="NCBIfam" id="TIGR00077">
    <property type="entry name" value="lspA"/>
    <property type="match status" value="1"/>
</dbReference>
<dbReference type="PANTHER" id="PTHR33695">
    <property type="entry name" value="LIPOPROTEIN SIGNAL PEPTIDASE"/>
    <property type="match status" value="1"/>
</dbReference>
<dbReference type="PANTHER" id="PTHR33695:SF1">
    <property type="entry name" value="LIPOPROTEIN SIGNAL PEPTIDASE"/>
    <property type="match status" value="1"/>
</dbReference>
<dbReference type="Pfam" id="PF01252">
    <property type="entry name" value="Peptidase_A8"/>
    <property type="match status" value="1"/>
</dbReference>
<dbReference type="PRINTS" id="PR00781">
    <property type="entry name" value="LIPOSIGPTASE"/>
</dbReference>
<dbReference type="PROSITE" id="PS00855">
    <property type="entry name" value="SPASE_II"/>
    <property type="match status" value="1"/>
</dbReference>